<sequence>MLEIHQFPCLSDNYGFLLHDPDSGETAAIDTPDGKEYLKQAKAKGWTITHIWNTHWHPDHAGGNKDIVEATGAKVIAPQEVEKLSGIDRVVGHGDTVDIGDFTADVIDVSGHTNGHIAYHLPEAGIAFVGDSVFALGCGRMFEGEPKQFWDSLSRIKALPPETMLYCAHEYTAANARFAVHADPENDALVAYVEEITAKRERDEPTVPTQLKRELATNPFLRADDPALVAKWGGDAPHETFAALRAGKDNF</sequence>
<proteinExistence type="inferred from homology"/>
<reference key="1">
    <citation type="journal article" date="2009" name="J. Bacteriol.">
        <title>Complete genome sequence of Erythrobacter litoralis HTCC2594.</title>
        <authorList>
            <person name="Oh H.M."/>
            <person name="Giovannoni S.J."/>
            <person name="Ferriera S."/>
            <person name="Johnson J."/>
            <person name="Cho J.C."/>
        </authorList>
    </citation>
    <scope>NUCLEOTIDE SEQUENCE [LARGE SCALE GENOMIC DNA]</scope>
    <source>
        <strain>HTCC2594</strain>
    </source>
</reference>
<dbReference type="EC" id="3.1.2.6" evidence="1"/>
<dbReference type="EMBL" id="CP000157">
    <property type="protein sequence ID" value="ABC63594.1"/>
    <property type="molecule type" value="Genomic_DNA"/>
</dbReference>
<dbReference type="RefSeq" id="WP_011414428.1">
    <property type="nucleotide sequence ID" value="NC_007722.1"/>
</dbReference>
<dbReference type="SMR" id="Q2N9P7"/>
<dbReference type="STRING" id="314225.ELI_07510"/>
<dbReference type="KEGG" id="eli:ELI_07510"/>
<dbReference type="eggNOG" id="COG0491">
    <property type="taxonomic scope" value="Bacteria"/>
</dbReference>
<dbReference type="HOGENOM" id="CLU_030571_4_1_5"/>
<dbReference type="OrthoDB" id="9802248at2"/>
<dbReference type="UniPathway" id="UPA00619">
    <property type="reaction ID" value="UER00676"/>
</dbReference>
<dbReference type="Proteomes" id="UP000008808">
    <property type="component" value="Chromosome"/>
</dbReference>
<dbReference type="GO" id="GO:0004416">
    <property type="term" value="F:hydroxyacylglutathione hydrolase activity"/>
    <property type="evidence" value="ECO:0007669"/>
    <property type="project" value="UniProtKB-UniRule"/>
</dbReference>
<dbReference type="GO" id="GO:0046872">
    <property type="term" value="F:metal ion binding"/>
    <property type="evidence" value="ECO:0007669"/>
    <property type="project" value="UniProtKB-KW"/>
</dbReference>
<dbReference type="GO" id="GO:0019243">
    <property type="term" value="P:methylglyoxal catabolic process to D-lactate via S-lactoyl-glutathione"/>
    <property type="evidence" value="ECO:0007669"/>
    <property type="project" value="InterPro"/>
</dbReference>
<dbReference type="CDD" id="cd07723">
    <property type="entry name" value="hydroxyacylglutathione_hydrolase_MBL-fold"/>
    <property type="match status" value="1"/>
</dbReference>
<dbReference type="Gene3D" id="3.60.15.10">
    <property type="entry name" value="Ribonuclease Z/Hydroxyacylglutathione hydrolase-like"/>
    <property type="match status" value="1"/>
</dbReference>
<dbReference type="HAMAP" id="MF_01374">
    <property type="entry name" value="Glyoxalase_2"/>
    <property type="match status" value="1"/>
</dbReference>
<dbReference type="InterPro" id="IPR035680">
    <property type="entry name" value="Clx_II_MBL"/>
</dbReference>
<dbReference type="InterPro" id="IPR050110">
    <property type="entry name" value="Glyoxalase_II_hydrolase"/>
</dbReference>
<dbReference type="InterPro" id="IPR032282">
    <property type="entry name" value="HAGH_C"/>
</dbReference>
<dbReference type="InterPro" id="IPR017782">
    <property type="entry name" value="Hydroxyacylglutathione_Hdrlase"/>
</dbReference>
<dbReference type="InterPro" id="IPR001279">
    <property type="entry name" value="Metallo-B-lactamas"/>
</dbReference>
<dbReference type="InterPro" id="IPR036866">
    <property type="entry name" value="RibonucZ/Hydroxyglut_hydro"/>
</dbReference>
<dbReference type="NCBIfam" id="TIGR03413">
    <property type="entry name" value="GSH_gloB"/>
    <property type="match status" value="1"/>
</dbReference>
<dbReference type="PANTHER" id="PTHR43705">
    <property type="entry name" value="HYDROXYACYLGLUTATHIONE HYDROLASE"/>
    <property type="match status" value="1"/>
</dbReference>
<dbReference type="PANTHER" id="PTHR43705:SF1">
    <property type="entry name" value="HYDROXYACYLGLUTATHIONE HYDROLASE GLOB"/>
    <property type="match status" value="1"/>
</dbReference>
<dbReference type="Pfam" id="PF16123">
    <property type="entry name" value="HAGH_C"/>
    <property type="match status" value="1"/>
</dbReference>
<dbReference type="Pfam" id="PF00753">
    <property type="entry name" value="Lactamase_B"/>
    <property type="match status" value="1"/>
</dbReference>
<dbReference type="PIRSF" id="PIRSF005457">
    <property type="entry name" value="Glx"/>
    <property type="match status" value="1"/>
</dbReference>
<dbReference type="SMART" id="SM00849">
    <property type="entry name" value="Lactamase_B"/>
    <property type="match status" value="1"/>
</dbReference>
<dbReference type="SUPFAM" id="SSF56281">
    <property type="entry name" value="Metallo-hydrolase/oxidoreductase"/>
    <property type="match status" value="1"/>
</dbReference>
<evidence type="ECO:0000255" key="1">
    <source>
        <dbReference type="HAMAP-Rule" id="MF_01374"/>
    </source>
</evidence>
<name>GLO2_ERYLH</name>
<protein>
    <recommendedName>
        <fullName evidence="1">Hydroxyacylglutathione hydrolase</fullName>
        <ecNumber evidence="1">3.1.2.6</ecNumber>
    </recommendedName>
    <alternativeName>
        <fullName evidence="1">Glyoxalase II</fullName>
        <shortName evidence="1">Glx II</shortName>
    </alternativeName>
</protein>
<feature type="chain" id="PRO_1000068216" description="Hydroxyacylglutathione hydrolase">
    <location>
        <begin position="1"/>
        <end position="251"/>
    </location>
</feature>
<feature type="binding site" evidence="1">
    <location>
        <position position="55"/>
    </location>
    <ligand>
        <name>Zn(2+)</name>
        <dbReference type="ChEBI" id="CHEBI:29105"/>
        <label>1</label>
    </ligand>
</feature>
<feature type="binding site" evidence="1">
    <location>
        <position position="57"/>
    </location>
    <ligand>
        <name>Zn(2+)</name>
        <dbReference type="ChEBI" id="CHEBI:29105"/>
        <label>1</label>
    </ligand>
</feature>
<feature type="binding site" evidence="1">
    <location>
        <position position="59"/>
    </location>
    <ligand>
        <name>Zn(2+)</name>
        <dbReference type="ChEBI" id="CHEBI:29105"/>
        <label>2</label>
    </ligand>
</feature>
<feature type="binding site" evidence="1">
    <location>
        <position position="60"/>
    </location>
    <ligand>
        <name>Zn(2+)</name>
        <dbReference type="ChEBI" id="CHEBI:29105"/>
        <label>2</label>
    </ligand>
</feature>
<feature type="binding site" evidence="1">
    <location>
        <position position="112"/>
    </location>
    <ligand>
        <name>Zn(2+)</name>
        <dbReference type="ChEBI" id="CHEBI:29105"/>
        <label>1</label>
    </ligand>
</feature>
<feature type="binding site" evidence="1">
    <location>
        <position position="131"/>
    </location>
    <ligand>
        <name>Zn(2+)</name>
        <dbReference type="ChEBI" id="CHEBI:29105"/>
        <label>1</label>
    </ligand>
</feature>
<feature type="binding site" evidence="1">
    <location>
        <position position="131"/>
    </location>
    <ligand>
        <name>Zn(2+)</name>
        <dbReference type="ChEBI" id="CHEBI:29105"/>
        <label>2</label>
    </ligand>
</feature>
<feature type="binding site" evidence="1">
    <location>
        <position position="169"/>
    </location>
    <ligand>
        <name>Zn(2+)</name>
        <dbReference type="ChEBI" id="CHEBI:29105"/>
        <label>2</label>
    </ligand>
</feature>
<comment type="function">
    <text evidence="1">Thiolesterase that catalyzes the hydrolysis of S-D-lactoyl-glutathione to form glutathione and D-lactic acid.</text>
</comment>
<comment type="catalytic activity">
    <reaction evidence="1">
        <text>an S-(2-hydroxyacyl)glutathione + H2O = a 2-hydroxy carboxylate + glutathione + H(+)</text>
        <dbReference type="Rhea" id="RHEA:21864"/>
        <dbReference type="ChEBI" id="CHEBI:15377"/>
        <dbReference type="ChEBI" id="CHEBI:15378"/>
        <dbReference type="ChEBI" id="CHEBI:57925"/>
        <dbReference type="ChEBI" id="CHEBI:58896"/>
        <dbReference type="ChEBI" id="CHEBI:71261"/>
        <dbReference type="EC" id="3.1.2.6"/>
    </reaction>
</comment>
<comment type="cofactor">
    <cofactor evidence="1">
        <name>Zn(2+)</name>
        <dbReference type="ChEBI" id="CHEBI:29105"/>
    </cofactor>
    <text evidence="1">Binds 2 Zn(2+) ions per subunit.</text>
</comment>
<comment type="pathway">
    <text evidence="1">Secondary metabolite metabolism; methylglyoxal degradation; (R)-lactate from methylglyoxal: step 2/2.</text>
</comment>
<comment type="subunit">
    <text evidence="1">Monomer.</text>
</comment>
<comment type="similarity">
    <text evidence="1">Belongs to the metallo-beta-lactamase superfamily. Glyoxalase II family.</text>
</comment>
<keyword id="KW-0378">Hydrolase</keyword>
<keyword id="KW-0479">Metal-binding</keyword>
<keyword id="KW-1185">Reference proteome</keyword>
<keyword id="KW-0862">Zinc</keyword>
<organism>
    <name type="scientific">Erythrobacter litoralis (strain HTCC2594)</name>
    <dbReference type="NCBI Taxonomy" id="314225"/>
    <lineage>
        <taxon>Bacteria</taxon>
        <taxon>Pseudomonadati</taxon>
        <taxon>Pseudomonadota</taxon>
        <taxon>Alphaproteobacteria</taxon>
        <taxon>Sphingomonadales</taxon>
        <taxon>Erythrobacteraceae</taxon>
        <taxon>Erythrobacter/Porphyrobacter group</taxon>
        <taxon>Erythrobacter</taxon>
    </lineage>
</organism>
<gene>
    <name evidence="1" type="primary">gloB</name>
    <name type="ordered locus">ELI_07510</name>
</gene>
<accession>Q2N9P7</accession>